<organism>
    <name type="scientific">Schistosoma mansoni</name>
    <name type="common">Blood fluke</name>
    <dbReference type="NCBI Taxonomy" id="6183"/>
    <lineage>
        <taxon>Eukaryota</taxon>
        <taxon>Metazoa</taxon>
        <taxon>Spiralia</taxon>
        <taxon>Lophotrochozoa</taxon>
        <taxon>Platyhelminthes</taxon>
        <taxon>Trematoda</taxon>
        <taxon>Digenea</taxon>
        <taxon>Strigeidida</taxon>
        <taxon>Schistosomatoidea</taxon>
        <taxon>Schistosomatidae</taxon>
        <taxon>Schistosoma</taxon>
    </lineage>
</organism>
<keyword id="KW-0903">Direct protein sequencing</keyword>
<keyword id="KW-0378">Hydrolase</keyword>
<keyword id="KW-0645">Protease</keyword>
<keyword id="KW-1185">Reference proteome</keyword>
<keyword id="KW-0732">Signal</keyword>
<keyword id="KW-0788">Thiol protease</keyword>
<protein>
    <recommendedName>
        <fullName>Hemoglobinase</fullName>
        <ecNumber>3.4.22.34</ecNumber>
    </recommendedName>
    <alternativeName>
        <fullName>Antigen SM32</fullName>
    </alternativeName>
</protein>
<accession>P09841</accession>
<sequence length="429" mass="49032">MMLFSLFLISILHILLVKCQLDTNYEVSDETVSDNNKWAVLVAGSNGYPNYRHQADVCHAYHVLRSKGIKPEHIITMMYDDIAYNLMNPFPGKLFNDYNHKDWYEGVVIDYRGKNVNSKTFLKVLKGDKSAGGKVLKSGKNDDVFIYFTDHGAPGLIAFPDDELYAKEFMSTLKYLHSHKRYSKLVIYIEANESGSMFQQILPSNLSIYATTAANSTECSYSTFCGDPTITTCLADLYSYNWIVDSQTHHLTQRTLDQQYKEVKRETDLSHVQRYGDTRMGKLYVSEFQGSRDKSSSENDEPPMKPRHSIASRDIPLHTLHRQIMMTNNAEDKSFLMQILGLKLKRRDLIEDTMKLIVKVMNNEEIPNTKATIDQTLDCTESVYEQFKSKCFTLQQAPEVGGHFSTLYNYCADGYTAETINEAIIKICG</sequence>
<evidence type="ECO:0000255" key="1"/>
<evidence type="ECO:0000256" key="2">
    <source>
        <dbReference type="SAM" id="MobiDB-lite"/>
    </source>
</evidence>
<evidence type="ECO:0000305" key="3"/>
<comment type="function">
    <text>This protease is used by the parasite for degradation of the host globin.</text>
</comment>
<comment type="catalytic activity">
    <reaction>
        <text>Hydrolysis of proteins and small molecule substrates at -Asn-|-Xaa- bonds.</text>
        <dbReference type="EC" id="3.4.22.34"/>
    </reaction>
</comment>
<comment type="similarity">
    <text evidence="3">Belongs to the peptidase C13 family.</text>
</comment>
<proteinExistence type="evidence at protein level"/>
<feature type="signal peptide" evidence="1">
    <location>
        <begin position="1"/>
        <end position="19"/>
    </location>
</feature>
<feature type="propeptide" id="PRO_0000026508" evidence="1">
    <location>
        <begin position="20"/>
        <end position="31"/>
    </location>
</feature>
<feature type="chain" id="PRO_0000026509" description="Hemoglobinase">
    <location>
        <begin position="32"/>
        <end position="291"/>
    </location>
</feature>
<feature type="propeptide" id="PRO_0000026510" evidence="1">
    <location>
        <begin position="292"/>
        <end position="429"/>
    </location>
</feature>
<feature type="region of interest" description="Disordered" evidence="2">
    <location>
        <begin position="288"/>
        <end position="309"/>
    </location>
</feature>
<feature type="active site" evidence="1">
    <location>
        <position position="151"/>
    </location>
</feature>
<feature type="sequence conflict" description="In Ref. 2; AAA29895." evidence="3" ref="2">
    <original>P</original>
    <variation>L</variation>
    <location>
        <position position="91"/>
    </location>
</feature>
<feature type="sequence conflict" description="In Ref. 2; AAA29895." evidence="3" ref="2">
    <original>N</original>
    <variation>K</variation>
    <location>
        <position position="115"/>
    </location>
</feature>
<feature type="sequence conflict" description="In Ref. 2; AAA29895." evidence="3" ref="2">
    <original>S</original>
    <variation>P</variation>
    <location>
        <position position="216"/>
    </location>
</feature>
<feature type="sequence conflict" description="In Ref. 2; AAA29895." evidence="3" ref="2">
    <original>S</original>
    <variation>T</variation>
    <location>
        <position position="297"/>
    </location>
</feature>
<feature type="sequence conflict" description="In Ref. 2; AAA29895." evidence="3" ref="2">
    <original>P</original>
    <variation>S</variation>
    <location>
        <position position="302"/>
    </location>
</feature>
<feature type="sequence conflict" description="In Ref. 3; AAA29916." evidence="3" ref="3">
    <original>I</original>
    <variation>V</variation>
    <location>
        <position position="310"/>
    </location>
</feature>
<dbReference type="EC" id="3.4.22.34"/>
<dbReference type="EMBL" id="M21308">
    <property type="protein sequence ID" value="AAA29895.1"/>
    <property type="molecule type" value="mRNA"/>
</dbReference>
<dbReference type="EMBL" id="M17423">
    <property type="protein sequence ID" value="AAA29916.1"/>
    <property type="molecule type" value="mRNA"/>
</dbReference>
<dbReference type="PIR" id="A60145">
    <property type="entry name" value="A60145"/>
</dbReference>
<dbReference type="SMR" id="P09841"/>
<dbReference type="STRING" id="6183.P09841"/>
<dbReference type="MEROPS" id="C13.007"/>
<dbReference type="eggNOG" id="KOG1348">
    <property type="taxonomic scope" value="Eukaryota"/>
</dbReference>
<dbReference type="HOGENOM" id="CLU_024160_0_0_1"/>
<dbReference type="InParanoid" id="P09841"/>
<dbReference type="BRENDA" id="3.4.22.34">
    <property type="organism ID" value="5608"/>
</dbReference>
<dbReference type="Proteomes" id="UP000008854">
    <property type="component" value="Unassembled WGS sequence"/>
</dbReference>
<dbReference type="GO" id="GO:0005773">
    <property type="term" value="C:vacuole"/>
    <property type="evidence" value="ECO:0007669"/>
    <property type="project" value="GOC"/>
</dbReference>
<dbReference type="GO" id="GO:0004197">
    <property type="term" value="F:cysteine-type endopeptidase activity"/>
    <property type="evidence" value="ECO:0007669"/>
    <property type="project" value="UniProtKB-EC"/>
</dbReference>
<dbReference type="GO" id="GO:0051603">
    <property type="term" value="P:proteolysis involved in protein catabolic process"/>
    <property type="evidence" value="ECO:0007669"/>
    <property type="project" value="InterPro"/>
</dbReference>
<dbReference type="GO" id="GO:0006624">
    <property type="term" value="P:vacuolar protein processing"/>
    <property type="evidence" value="ECO:0007669"/>
    <property type="project" value="TreeGrafter"/>
</dbReference>
<dbReference type="CDD" id="cd21115">
    <property type="entry name" value="legumain_C"/>
    <property type="match status" value="1"/>
</dbReference>
<dbReference type="FunFam" id="3.40.50.1460:FF:000006">
    <property type="entry name" value="Legumain"/>
    <property type="match status" value="1"/>
</dbReference>
<dbReference type="Gene3D" id="1.10.132.130">
    <property type="match status" value="1"/>
</dbReference>
<dbReference type="Gene3D" id="3.40.50.1460">
    <property type="match status" value="1"/>
</dbReference>
<dbReference type="InterPro" id="IPR043577">
    <property type="entry name" value="AE"/>
</dbReference>
<dbReference type="InterPro" id="IPR048501">
    <property type="entry name" value="Legum_prodom"/>
</dbReference>
<dbReference type="InterPro" id="IPR046427">
    <property type="entry name" value="Legumain_prodom_sf"/>
</dbReference>
<dbReference type="InterPro" id="IPR001096">
    <property type="entry name" value="Peptidase_C13"/>
</dbReference>
<dbReference type="PANTHER" id="PTHR12000">
    <property type="entry name" value="HEMOGLOBINASE FAMILY MEMBER"/>
    <property type="match status" value="1"/>
</dbReference>
<dbReference type="PANTHER" id="PTHR12000:SF42">
    <property type="entry name" value="LEGUMAIN"/>
    <property type="match status" value="1"/>
</dbReference>
<dbReference type="Pfam" id="PF20985">
    <property type="entry name" value="Legum_prodom"/>
    <property type="match status" value="1"/>
</dbReference>
<dbReference type="Pfam" id="PF01650">
    <property type="entry name" value="Peptidase_C13"/>
    <property type="match status" value="1"/>
</dbReference>
<dbReference type="PIRSF" id="PIRSF500139">
    <property type="entry name" value="AE"/>
    <property type="match status" value="1"/>
</dbReference>
<dbReference type="PIRSF" id="PIRSF019663">
    <property type="entry name" value="Legumain"/>
    <property type="match status" value="1"/>
</dbReference>
<dbReference type="PRINTS" id="PR00776">
    <property type="entry name" value="HEMOGLOBNASE"/>
</dbReference>
<reference key="1">
    <citation type="journal article" date="1990" name="Am. J. Trop. Med. Hyg.">
        <title>Definition of the complete Schistosoma mansoni hemoglobinase mRNA sequence and gene expression in developing parasites.</title>
        <authorList>
            <person name="el Meanawy M.A."/>
            <person name="Aji T."/>
            <person name="Phillips N.F.B."/>
            <person name="Davis R.E."/>
            <person name="Salata R.A."/>
            <person name="Malchotra I."/>
            <person name="McClain D."/>
            <person name="Aikawa M."/>
            <person name="Davis A.H."/>
        </authorList>
    </citation>
    <scope>NUCLEOTIDE SEQUENCE [MRNA]</scope>
    <scope>PROTEIN SEQUENCE OF 32-57</scope>
</reference>
<reference key="2">
    <citation type="journal article" date="1989" name="Mol. Biochem. Parasitol.">
        <title>Primary structures of Sm31/32 diagnostic proteins of Schistosoma mansoni and their identification as proteases.</title>
        <authorList>
            <person name="Klinkert M.-Q."/>
            <person name="Felleisen R."/>
            <person name="Link G."/>
            <person name="Ruppel A."/>
            <person name="Beck E."/>
        </authorList>
    </citation>
    <scope>NUCLEOTIDE SEQUENCE [MRNA]</scope>
</reference>
<reference key="3">
    <citation type="journal article" date="1987" name="J. Biol. Chem.">
        <title>Cloning and gene expression of Schistosoma mansoni protease.</title>
        <authorList>
            <person name="Davis A.H."/>
            <person name="Nanduri J."/>
            <person name="Watson D.C."/>
        </authorList>
    </citation>
    <scope>NUCLEOTIDE SEQUENCE [MRNA] OF 77-429</scope>
</reference>
<name>HGLB_SCHMA</name>